<name>ISPF_THISH</name>
<comment type="function">
    <text evidence="1">Involved in the biosynthesis of isopentenyl diphosphate (IPP) and dimethylallyl diphosphate (DMAPP), two major building blocks of isoprenoid compounds. Catalyzes the conversion of 4-diphosphocytidyl-2-C-methyl-D-erythritol 2-phosphate (CDP-ME2P) to 2-C-methyl-D-erythritol 2,4-cyclodiphosphate (ME-CPP) with a corresponding release of cytidine 5-monophosphate (CMP).</text>
</comment>
<comment type="catalytic activity">
    <reaction evidence="1">
        <text>4-CDP-2-C-methyl-D-erythritol 2-phosphate = 2-C-methyl-D-erythritol 2,4-cyclic diphosphate + CMP</text>
        <dbReference type="Rhea" id="RHEA:23864"/>
        <dbReference type="ChEBI" id="CHEBI:57919"/>
        <dbReference type="ChEBI" id="CHEBI:58483"/>
        <dbReference type="ChEBI" id="CHEBI:60377"/>
        <dbReference type="EC" id="4.6.1.12"/>
    </reaction>
</comment>
<comment type="cofactor">
    <cofactor evidence="1">
        <name>a divalent metal cation</name>
        <dbReference type="ChEBI" id="CHEBI:60240"/>
    </cofactor>
    <text evidence="1">Binds 1 divalent metal cation per subunit.</text>
</comment>
<comment type="pathway">
    <text evidence="1">Isoprenoid biosynthesis; isopentenyl diphosphate biosynthesis via DXP pathway; isopentenyl diphosphate from 1-deoxy-D-xylulose 5-phosphate: step 4/6.</text>
</comment>
<comment type="subunit">
    <text evidence="1">Homotrimer.</text>
</comment>
<comment type="similarity">
    <text evidence="1">Belongs to the IspF family.</text>
</comment>
<dbReference type="EC" id="4.6.1.12" evidence="1"/>
<dbReference type="EMBL" id="CP001339">
    <property type="protein sequence ID" value="ACL72273.1"/>
    <property type="molecule type" value="Genomic_DNA"/>
</dbReference>
<dbReference type="RefSeq" id="WP_012637756.1">
    <property type="nucleotide sequence ID" value="NC_011901.1"/>
</dbReference>
<dbReference type="SMR" id="B8GQ78"/>
<dbReference type="STRING" id="396588.Tgr7_1187"/>
<dbReference type="KEGG" id="tgr:Tgr7_1187"/>
<dbReference type="eggNOG" id="COG0245">
    <property type="taxonomic scope" value="Bacteria"/>
</dbReference>
<dbReference type="HOGENOM" id="CLU_084630_2_0_6"/>
<dbReference type="UniPathway" id="UPA00056">
    <property type="reaction ID" value="UER00095"/>
</dbReference>
<dbReference type="Proteomes" id="UP000002383">
    <property type="component" value="Chromosome"/>
</dbReference>
<dbReference type="GO" id="GO:0008685">
    <property type="term" value="F:2-C-methyl-D-erythritol 2,4-cyclodiphosphate synthase activity"/>
    <property type="evidence" value="ECO:0007669"/>
    <property type="project" value="UniProtKB-UniRule"/>
</dbReference>
<dbReference type="GO" id="GO:0046872">
    <property type="term" value="F:metal ion binding"/>
    <property type="evidence" value="ECO:0007669"/>
    <property type="project" value="UniProtKB-KW"/>
</dbReference>
<dbReference type="GO" id="GO:0019288">
    <property type="term" value="P:isopentenyl diphosphate biosynthetic process, methylerythritol 4-phosphate pathway"/>
    <property type="evidence" value="ECO:0007669"/>
    <property type="project" value="UniProtKB-UniRule"/>
</dbReference>
<dbReference type="GO" id="GO:0016114">
    <property type="term" value="P:terpenoid biosynthetic process"/>
    <property type="evidence" value="ECO:0007669"/>
    <property type="project" value="InterPro"/>
</dbReference>
<dbReference type="CDD" id="cd00554">
    <property type="entry name" value="MECDP_synthase"/>
    <property type="match status" value="1"/>
</dbReference>
<dbReference type="FunFam" id="3.30.1330.50:FF:000001">
    <property type="entry name" value="2-C-methyl-D-erythritol 2,4-cyclodiphosphate synthase"/>
    <property type="match status" value="1"/>
</dbReference>
<dbReference type="Gene3D" id="3.30.1330.50">
    <property type="entry name" value="2-C-methyl-D-erythritol 2,4-cyclodiphosphate synthase"/>
    <property type="match status" value="1"/>
</dbReference>
<dbReference type="HAMAP" id="MF_00107">
    <property type="entry name" value="IspF"/>
    <property type="match status" value="1"/>
</dbReference>
<dbReference type="InterPro" id="IPR003526">
    <property type="entry name" value="MECDP_synthase"/>
</dbReference>
<dbReference type="InterPro" id="IPR020555">
    <property type="entry name" value="MECDP_synthase_CS"/>
</dbReference>
<dbReference type="InterPro" id="IPR036571">
    <property type="entry name" value="MECDP_synthase_sf"/>
</dbReference>
<dbReference type="NCBIfam" id="TIGR00151">
    <property type="entry name" value="ispF"/>
    <property type="match status" value="1"/>
</dbReference>
<dbReference type="PANTHER" id="PTHR43181">
    <property type="entry name" value="2-C-METHYL-D-ERYTHRITOL 2,4-CYCLODIPHOSPHATE SYNTHASE, CHLOROPLASTIC"/>
    <property type="match status" value="1"/>
</dbReference>
<dbReference type="PANTHER" id="PTHR43181:SF1">
    <property type="entry name" value="2-C-METHYL-D-ERYTHRITOL 2,4-CYCLODIPHOSPHATE SYNTHASE, CHLOROPLASTIC"/>
    <property type="match status" value="1"/>
</dbReference>
<dbReference type="Pfam" id="PF02542">
    <property type="entry name" value="YgbB"/>
    <property type="match status" value="1"/>
</dbReference>
<dbReference type="SUPFAM" id="SSF69765">
    <property type="entry name" value="IpsF-like"/>
    <property type="match status" value="1"/>
</dbReference>
<dbReference type="PROSITE" id="PS01350">
    <property type="entry name" value="ISPF"/>
    <property type="match status" value="1"/>
</dbReference>
<protein>
    <recommendedName>
        <fullName evidence="1">2-C-methyl-D-erythritol 2,4-cyclodiphosphate synthase</fullName>
        <shortName evidence="1">MECDP-synthase</shortName>
        <shortName evidence="1">MECPP-synthase</shortName>
        <shortName evidence="1">MECPS</shortName>
        <ecNumber evidence="1">4.6.1.12</ecNumber>
    </recommendedName>
</protein>
<feature type="chain" id="PRO_1000190721" description="2-C-methyl-D-erythritol 2,4-cyclodiphosphate synthase">
    <location>
        <begin position="1"/>
        <end position="160"/>
    </location>
</feature>
<feature type="binding site" evidence="1">
    <location>
        <begin position="11"/>
        <end position="13"/>
    </location>
    <ligand>
        <name>4-CDP-2-C-methyl-D-erythritol 2-phosphate</name>
        <dbReference type="ChEBI" id="CHEBI:57919"/>
    </ligand>
</feature>
<feature type="binding site" evidence="1">
    <location>
        <position position="11"/>
    </location>
    <ligand>
        <name>a divalent metal cation</name>
        <dbReference type="ChEBI" id="CHEBI:60240"/>
    </ligand>
</feature>
<feature type="binding site" evidence="1">
    <location>
        <position position="13"/>
    </location>
    <ligand>
        <name>a divalent metal cation</name>
        <dbReference type="ChEBI" id="CHEBI:60240"/>
    </ligand>
</feature>
<feature type="binding site" evidence="1">
    <location>
        <begin position="37"/>
        <end position="38"/>
    </location>
    <ligand>
        <name>4-CDP-2-C-methyl-D-erythritol 2-phosphate</name>
        <dbReference type="ChEBI" id="CHEBI:57919"/>
    </ligand>
</feature>
<feature type="binding site" evidence="1">
    <location>
        <position position="45"/>
    </location>
    <ligand>
        <name>a divalent metal cation</name>
        <dbReference type="ChEBI" id="CHEBI:60240"/>
    </ligand>
</feature>
<feature type="binding site" evidence="1">
    <location>
        <begin position="59"/>
        <end position="61"/>
    </location>
    <ligand>
        <name>4-CDP-2-C-methyl-D-erythritol 2-phosphate</name>
        <dbReference type="ChEBI" id="CHEBI:57919"/>
    </ligand>
</feature>
<feature type="binding site" evidence="1">
    <location>
        <begin position="64"/>
        <end position="68"/>
    </location>
    <ligand>
        <name>4-CDP-2-C-methyl-D-erythritol 2-phosphate</name>
        <dbReference type="ChEBI" id="CHEBI:57919"/>
    </ligand>
</feature>
<feature type="binding site" evidence="1">
    <location>
        <begin position="103"/>
        <end position="109"/>
    </location>
    <ligand>
        <name>4-CDP-2-C-methyl-D-erythritol 2-phosphate</name>
        <dbReference type="ChEBI" id="CHEBI:57919"/>
    </ligand>
</feature>
<feature type="binding site" evidence="1">
    <location>
        <begin position="135"/>
        <end position="138"/>
    </location>
    <ligand>
        <name>4-CDP-2-C-methyl-D-erythritol 2-phosphate</name>
        <dbReference type="ChEBI" id="CHEBI:57919"/>
    </ligand>
</feature>
<feature type="binding site" evidence="1">
    <location>
        <position position="142"/>
    </location>
    <ligand>
        <name>4-CDP-2-C-methyl-D-erythritol 2-phosphate</name>
        <dbReference type="ChEBI" id="CHEBI:57919"/>
    </ligand>
</feature>
<feature type="binding site" evidence="1">
    <location>
        <position position="145"/>
    </location>
    <ligand>
        <name>4-CDP-2-C-methyl-D-erythritol 2-phosphate</name>
        <dbReference type="ChEBI" id="CHEBI:57919"/>
    </ligand>
</feature>
<feature type="site" description="Transition state stabilizer" evidence="1">
    <location>
        <position position="37"/>
    </location>
</feature>
<feature type="site" description="Transition state stabilizer" evidence="1">
    <location>
        <position position="136"/>
    </location>
</feature>
<organism>
    <name type="scientific">Thioalkalivibrio sulfidiphilus (strain HL-EbGR7)</name>
    <dbReference type="NCBI Taxonomy" id="396588"/>
    <lineage>
        <taxon>Bacteria</taxon>
        <taxon>Pseudomonadati</taxon>
        <taxon>Pseudomonadota</taxon>
        <taxon>Gammaproteobacteria</taxon>
        <taxon>Chromatiales</taxon>
        <taxon>Ectothiorhodospiraceae</taxon>
        <taxon>Thioalkalivibrio</taxon>
    </lineage>
</organism>
<sequence>MANIRIGHGYDVHAFKAGGHVVLGGVRIPHAKAFAAHSDGDVLIHALCDALLGAAALGDIGRHFPDTDPAYKGADSRVLLRRVVELLHEQGYRVGNVDATIIAQAPKMAPHIEAMRANLADDLGVALECVNVKATTTERLGFAGREEGIAAHAVALIESF</sequence>
<proteinExistence type="inferred from homology"/>
<accession>B8GQ78</accession>
<gene>
    <name evidence="1" type="primary">ispF</name>
    <name type="ordered locus">Tgr7_1187</name>
</gene>
<evidence type="ECO:0000255" key="1">
    <source>
        <dbReference type="HAMAP-Rule" id="MF_00107"/>
    </source>
</evidence>
<keyword id="KW-0414">Isoprene biosynthesis</keyword>
<keyword id="KW-0456">Lyase</keyword>
<keyword id="KW-0479">Metal-binding</keyword>
<keyword id="KW-1185">Reference proteome</keyword>
<reference key="1">
    <citation type="journal article" date="2011" name="Stand. Genomic Sci.">
        <title>Complete genome sequence of 'Thioalkalivibrio sulfidophilus' HL-EbGr7.</title>
        <authorList>
            <person name="Muyzer G."/>
            <person name="Sorokin D.Y."/>
            <person name="Mavromatis K."/>
            <person name="Lapidus A."/>
            <person name="Clum A."/>
            <person name="Ivanova N."/>
            <person name="Pati A."/>
            <person name="d'Haeseleer P."/>
            <person name="Woyke T."/>
            <person name="Kyrpides N.C."/>
        </authorList>
    </citation>
    <scope>NUCLEOTIDE SEQUENCE [LARGE SCALE GENOMIC DNA]</scope>
    <source>
        <strain>HL-EbGR7</strain>
    </source>
</reference>